<dbReference type="EC" id="2.7.2.3" evidence="2"/>
<dbReference type="EMBL" id="X98487">
    <property type="protein sequence ID" value="CAA67113.1"/>
    <property type="molecule type" value="Genomic_DNA"/>
</dbReference>
<dbReference type="SMR" id="Q27685"/>
<dbReference type="VEuPathDB" id="TriTrypDB:LmxM.20.0100"/>
<dbReference type="UniPathway" id="UPA00109">
    <property type="reaction ID" value="UER00185"/>
</dbReference>
<dbReference type="GO" id="GO:0005829">
    <property type="term" value="C:cytosol"/>
    <property type="evidence" value="ECO:0007669"/>
    <property type="project" value="TreeGrafter"/>
</dbReference>
<dbReference type="GO" id="GO:0020015">
    <property type="term" value="C:glycosome"/>
    <property type="evidence" value="ECO:0007669"/>
    <property type="project" value="UniProtKB-SubCell"/>
</dbReference>
<dbReference type="GO" id="GO:0043531">
    <property type="term" value="F:ADP binding"/>
    <property type="evidence" value="ECO:0007669"/>
    <property type="project" value="TreeGrafter"/>
</dbReference>
<dbReference type="GO" id="GO:0005524">
    <property type="term" value="F:ATP binding"/>
    <property type="evidence" value="ECO:0007669"/>
    <property type="project" value="UniProtKB-KW"/>
</dbReference>
<dbReference type="GO" id="GO:0046872">
    <property type="term" value="F:metal ion binding"/>
    <property type="evidence" value="ECO:0007669"/>
    <property type="project" value="UniProtKB-KW"/>
</dbReference>
<dbReference type="GO" id="GO:0004618">
    <property type="term" value="F:phosphoglycerate kinase activity"/>
    <property type="evidence" value="ECO:0007669"/>
    <property type="project" value="UniProtKB-EC"/>
</dbReference>
<dbReference type="GO" id="GO:0006094">
    <property type="term" value="P:gluconeogenesis"/>
    <property type="evidence" value="ECO:0007669"/>
    <property type="project" value="TreeGrafter"/>
</dbReference>
<dbReference type="GO" id="GO:0006096">
    <property type="term" value="P:glycolytic process"/>
    <property type="evidence" value="ECO:0007669"/>
    <property type="project" value="UniProtKB-UniPathway"/>
</dbReference>
<dbReference type="CDD" id="cd00318">
    <property type="entry name" value="Phosphoglycerate_kinase"/>
    <property type="match status" value="1"/>
</dbReference>
<dbReference type="FunFam" id="3.40.50.1260:FF:000001">
    <property type="entry name" value="Phosphoglycerate kinase"/>
    <property type="match status" value="1"/>
</dbReference>
<dbReference type="FunFam" id="3.40.50.1260:FF:000011">
    <property type="entry name" value="Phosphoglycerate kinase"/>
    <property type="match status" value="1"/>
</dbReference>
<dbReference type="Gene3D" id="3.40.50.1260">
    <property type="entry name" value="Phosphoglycerate kinase, N-terminal domain"/>
    <property type="match status" value="2"/>
</dbReference>
<dbReference type="HAMAP" id="MF_00145">
    <property type="entry name" value="Phosphoglyc_kinase"/>
    <property type="match status" value="1"/>
</dbReference>
<dbReference type="InterPro" id="IPR027250">
    <property type="entry name" value="Pgk_euglenozoa"/>
</dbReference>
<dbReference type="InterPro" id="IPR001576">
    <property type="entry name" value="Phosphoglycerate_kinase"/>
</dbReference>
<dbReference type="InterPro" id="IPR015911">
    <property type="entry name" value="Phosphoglycerate_kinase_CS"/>
</dbReference>
<dbReference type="InterPro" id="IPR015824">
    <property type="entry name" value="Phosphoglycerate_kinase_N"/>
</dbReference>
<dbReference type="InterPro" id="IPR036043">
    <property type="entry name" value="Phosphoglycerate_kinase_sf"/>
</dbReference>
<dbReference type="PANTHER" id="PTHR11406">
    <property type="entry name" value="PHOSPHOGLYCERATE KINASE"/>
    <property type="match status" value="1"/>
</dbReference>
<dbReference type="PANTHER" id="PTHR11406:SF23">
    <property type="entry name" value="PHOSPHOGLYCERATE KINASE 1, CHLOROPLASTIC-RELATED"/>
    <property type="match status" value="1"/>
</dbReference>
<dbReference type="Pfam" id="PF00162">
    <property type="entry name" value="PGK"/>
    <property type="match status" value="1"/>
</dbReference>
<dbReference type="PIRSF" id="PIRSF000724">
    <property type="entry name" value="Pgk"/>
    <property type="match status" value="1"/>
</dbReference>
<dbReference type="PIRSF" id="PIRSF500126">
    <property type="entry name" value="Pgk_euglenozoa"/>
    <property type="match status" value="1"/>
</dbReference>
<dbReference type="PRINTS" id="PR00477">
    <property type="entry name" value="PHGLYCKINASE"/>
</dbReference>
<dbReference type="SUPFAM" id="SSF53748">
    <property type="entry name" value="Phosphoglycerate kinase"/>
    <property type="match status" value="1"/>
</dbReference>
<dbReference type="PROSITE" id="PS00111">
    <property type="entry name" value="PGLYCERATE_KINASE"/>
    <property type="match status" value="1"/>
</dbReference>
<sequence>MSLVLKKSIDDVALKDKKVLIRVDFNVPVKNGEITNDFRIRSALPTIQKVLKEGGSCILMSHLGRPKGARMSDPKPEKGVRGYEEAATLRPVAAALSELLEKKVAFAPDCLNASIYVSKLKRGDVLLLENVRFYTEEGSKKEEEADAMAKVLASYADLYVSDAFGTAHRDSATMTGIPKVLGSGYAGYLMEKEINYFSRVLNNPPRPLVAIVGGAKVSDKIELLDNMLGRINYLVIGGAMAYTFQKAQGRKIGISMCEEDKLDLAKSLLKKAQERGVQVLLPVDHVCNKEFKAVDSPLVTEDVDVPDGYMALDIGPKTIHMYEEVIGRCKSAIWNGPMGVFEMPCYSKGTFAVAKAMGTGTQKDGLLSIIGGGDTASAAELSGEAKNMSHVSTGGGASLELLEGKTLPGVAILTDKEVKGRGPLLKCACGGASPSNESCPRRREGIWGGGFIVTEIVKLVGALLIGIFIGRRLNTKLIR</sequence>
<feature type="chain" id="PRO_0000145856" description="Phosphoglycerate kinase, glycosomal">
    <location>
        <begin position="1"/>
        <end position="479"/>
    </location>
</feature>
<feature type="binding site" evidence="2">
    <location>
        <position position="23"/>
    </location>
    <ligand>
        <name>(2R)-3-phosphoglycerate</name>
        <dbReference type="ChEBI" id="CHEBI:58272"/>
    </ligand>
</feature>
<feature type="binding site" evidence="4">
    <location>
        <position position="24"/>
    </location>
    <ligand>
        <name>(2R)-3-phosphoglycerate</name>
        <dbReference type="ChEBI" id="CHEBI:58272"/>
    </ligand>
</feature>
<feature type="binding site" evidence="2">
    <location>
        <position position="25"/>
    </location>
    <ligand>
        <name>(2R)-3-phosphoglycerate</name>
        <dbReference type="ChEBI" id="CHEBI:58272"/>
    </ligand>
</feature>
<feature type="binding site" evidence="4">
    <location>
        <position position="26"/>
    </location>
    <ligand>
        <name>(2R)-3-phosphoglycerate</name>
        <dbReference type="ChEBI" id="CHEBI:58272"/>
    </ligand>
</feature>
<feature type="binding site" evidence="4">
    <location>
        <position position="39"/>
    </location>
    <ligand>
        <name>(2R)-3-phosphoglycerate</name>
        <dbReference type="ChEBI" id="CHEBI:58272"/>
    </ligand>
</feature>
<feature type="binding site" evidence="2">
    <location>
        <position position="61"/>
    </location>
    <ligand>
        <name>(2R)-3-phosphoglycerate</name>
        <dbReference type="ChEBI" id="CHEBI:58272"/>
    </ligand>
</feature>
<feature type="binding site" evidence="4">
    <location>
        <position position="62"/>
    </location>
    <ligand>
        <name>(2R)-3-phosphoglycerate</name>
        <dbReference type="ChEBI" id="CHEBI:58272"/>
    </ligand>
</feature>
<feature type="binding site" evidence="2">
    <location>
        <position position="64"/>
    </location>
    <ligand>
        <name>(2R)-3-phosphoglycerate</name>
        <dbReference type="ChEBI" id="CHEBI:58272"/>
    </ligand>
</feature>
<feature type="binding site" evidence="4">
    <location>
        <position position="65"/>
    </location>
    <ligand>
        <name>(2R)-3-phosphoglycerate</name>
        <dbReference type="ChEBI" id="CHEBI:58272"/>
    </ligand>
</feature>
<feature type="binding site" evidence="4">
    <location>
        <position position="132"/>
    </location>
    <ligand>
        <name>(2R)-3-phosphoglycerate</name>
        <dbReference type="ChEBI" id="CHEBI:58272"/>
    </ligand>
</feature>
<feature type="binding site" evidence="2">
    <location>
        <position position="168"/>
    </location>
    <ligand>
        <name>(2R)-3-phosphoglycerate</name>
        <dbReference type="ChEBI" id="CHEBI:58272"/>
    </ligand>
</feature>
<feature type="binding site" evidence="4">
    <location>
        <position position="169"/>
    </location>
    <ligand>
        <name>(2R)-3-phosphoglycerate</name>
        <dbReference type="ChEBI" id="CHEBI:58272"/>
    </ligand>
</feature>
<feature type="binding site" evidence="2">
    <location>
        <position position="214"/>
    </location>
    <ligand>
        <name>ADP</name>
        <dbReference type="ChEBI" id="CHEBI:456216"/>
    </ligand>
</feature>
<feature type="binding site" evidence="2">
    <location>
        <position position="214"/>
    </location>
    <ligand>
        <name>CDP</name>
        <dbReference type="ChEBI" id="CHEBI:58069"/>
    </ligand>
</feature>
<feature type="binding site" evidence="3">
    <location>
        <position position="215"/>
    </location>
    <ligand>
        <name>ADP</name>
        <dbReference type="ChEBI" id="CHEBI:456216"/>
    </ligand>
</feature>
<feature type="binding site" evidence="4">
    <location>
        <position position="215"/>
    </location>
    <ligand>
        <name>AMP</name>
        <dbReference type="ChEBI" id="CHEBI:456215"/>
    </ligand>
</feature>
<feature type="binding site" evidence="4">
    <location>
        <position position="215"/>
    </location>
    <ligand>
        <name>ATP</name>
        <dbReference type="ChEBI" id="CHEBI:30616"/>
    </ligand>
</feature>
<feature type="binding site" evidence="2">
    <location>
        <position position="215"/>
    </location>
    <ligand>
        <name>Mg(2+)</name>
        <dbReference type="ChEBI" id="CHEBI:18420"/>
    </ligand>
</feature>
<feature type="binding site" evidence="3">
    <location>
        <position position="216"/>
    </location>
    <ligand>
        <name>(2R)-3-phosphoglycerate</name>
        <dbReference type="ChEBI" id="CHEBI:58272"/>
    </ligand>
</feature>
<feature type="binding site" evidence="4">
    <location>
        <position position="216"/>
    </location>
    <ligand>
        <name>AMP</name>
        <dbReference type="ChEBI" id="CHEBI:456215"/>
    </ligand>
</feature>
<feature type="binding site" evidence="2">
    <location>
        <position position="219"/>
    </location>
    <ligand>
        <name>CDP</name>
        <dbReference type="ChEBI" id="CHEBI:58069"/>
    </ligand>
</feature>
<feature type="binding site" evidence="2">
    <location>
        <position position="219"/>
    </location>
    <ligand>
        <name>Mg(2+)</name>
        <dbReference type="ChEBI" id="CHEBI:18420"/>
    </ligand>
</feature>
<feature type="binding site" evidence="3">
    <location>
        <position position="220"/>
    </location>
    <ligand>
        <name>ADP</name>
        <dbReference type="ChEBI" id="CHEBI:456216"/>
    </ligand>
</feature>
<feature type="binding site" evidence="4">
    <location>
        <position position="220"/>
    </location>
    <ligand>
        <name>AMP</name>
        <dbReference type="ChEBI" id="CHEBI:456215"/>
    </ligand>
</feature>
<feature type="binding site" evidence="4">
    <location>
        <position position="220"/>
    </location>
    <ligand>
        <name>ATP</name>
        <dbReference type="ChEBI" id="CHEBI:30616"/>
    </ligand>
</feature>
<feature type="binding site" evidence="2">
    <location>
        <position position="238"/>
    </location>
    <ligand>
        <name>ADP</name>
        <dbReference type="ChEBI" id="CHEBI:456216"/>
    </ligand>
</feature>
<feature type="binding site" evidence="2">
    <location>
        <position position="238"/>
    </location>
    <ligand>
        <name>CDP</name>
        <dbReference type="ChEBI" id="CHEBI:58069"/>
    </ligand>
</feature>
<feature type="binding site" evidence="4">
    <location>
        <position position="239"/>
    </location>
    <ligand>
        <name>AMP</name>
        <dbReference type="ChEBI" id="CHEBI:456215"/>
    </ligand>
</feature>
<feature type="binding site" evidence="4">
    <location>
        <position position="239"/>
    </location>
    <ligand>
        <name>ATP</name>
        <dbReference type="ChEBI" id="CHEBI:30616"/>
    </ligand>
</feature>
<feature type="binding site" evidence="3">
    <location>
        <position position="311"/>
    </location>
    <ligand>
        <name>ADP</name>
        <dbReference type="ChEBI" id="CHEBI:456216"/>
    </ligand>
</feature>
<feature type="binding site" evidence="4">
    <location>
        <position position="311"/>
    </location>
    <ligand>
        <name>AMP</name>
        <dbReference type="ChEBI" id="CHEBI:456215"/>
    </ligand>
</feature>
<feature type="binding site" evidence="4">
    <location>
        <position position="311"/>
    </location>
    <ligand>
        <name>ATP</name>
        <dbReference type="ChEBI" id="CHEBI:30616"/>
    </ligand>
</feature>
<feature type="binding site" evidence="3">
    <location>
        <position position="335"/>
    </location>
    <ligand>
        <name>ADP</name>
        <dbReference type="ChEBI" id="CHEBI:456216"/>
    </ligand>
</feature>
<feature type="binding site" evidence="2">
    <location>
        <position position="336"/>
    </location>
    <ligand>
        <name>CDP</name>
        <dbReference type="ChEBI" id="CHEBI:58069"/>
    </ligand>
</feature>
<feature type="binding site" evidence="2">
    <location>
        <position position="341"/>
    </location>
    <ligand>
        <name>ADP</name>
        <dbReference type="ChEBI" id="CHEBI:456216"/>
    </ligand>
</feature>
<feature type="binding site" evidence="2">
    <location>
        <position position="341"/>
    </location>
    <ligand>
        <name>CDP</name>
        <dbReference type="ChEBI" id="CHEBI:58069"/>
    </ligand>
</feature>
<feature type="binding site" evidence="3">
    <location>
        <position position="342"/>
    </location>
    <ligand>
        <name>ADP</name>
        <dbReference type="ChEBI" id="CHEBI:456216"/>
    </ligand>
</feature>
<feature type="binding site" evidence="4">
    <location>
        <position position="342"/>
    </location>
    <ligand>
        <name>AMP</name>
        <dbReference type="ChEBI" id="CHEBI:456215"/>
    </ligand>
</feature>
<feature type="binding site" evidence="4">
    <location>
        <position position="342"/>
    </location>
    <ligand>
        <name>ATP</name>
        <dbReference type="ChEBI" id="CHEBI:30616"/>
    </ligand>
</feature>
<feature type="binding site" evidence="3">
    <location>
        <position position="374"/>
    </location>
    <ligand>
        <name>ADP</name>
        <dbReference type="ChEBI" id="CHEBI:456216"/>
    </ligand>
</feature>
<feature type="binding site" evidence="4">
    <location>
        <position position="374"/>
    </location>
    <ligand>
        <name>ATP</name>
        <dbReference type="ChEBI" id="CHEBI:30616"/>
    </ligand>
</feature>
<feature type="binding site" evidence="4">
    <location>
        <position position="374"/>
    </location>
    <ligand>
        <name>Mg(2+)</name>
        <dbReference type="ChEBI" id="CHEBI:18420"/>
    </ligand>
</feature>
<feature type="binding site" evidence="3">
    <location>
        <position position="375"/>
    </location>
    <ligand>
        <name>ADP</name>
        <dbReference type="ChEBI" id="CHEBI:456216"/>
    </ligand>
</feature>
<feature type="binding site" evidence="4">
    <location>
        <position position="375"/>
    </location>
    <ligand>
        <name>ATP</name>
        <dbReference type="ChEBI" id="CHEBI:30616"/>
    </ligand>
</feature>
<comment type="catalytic activity">
    <reaction evidence="2">
        <text>(2R)-3-phosphoglycerate + ATP = (2R)-3-phospho-glyceroyl phosphate + ADP</text>
        <dbReference type="Rhea" id="RHEA:14801"/>
        <dbReference type="ChEBI" id="CHEBI:30616"/>
        <dbReference type="ChEBI" id="CHEBI:57604"/>
        <dbReference type="ChEBI" id="CHEBI:58272"/>
        <dbReference type="ChEBI" id="CHEBI:456216"/>
        <dbReference type="EC" id="2.7.2.3"/>
    </reaction>
</comment>
<comment type="cofactor">
    <cofactor evidence="3">
        <name>Mg(2+)</name>
        <dbReference type="ChEBI" id="CHEBI:18420"/>
    </cofactor>
</comment>
<comment type="pathway">
    <text>Carbohydrate degradation; glycolysis; pyruvate from D-glyceraldehyde 3-phosphate: step 2/5.</text>
</comment>
<comment type="subunit">
    <text evidence="1">Monomer.</text>
</comment>
<comment type="subcellular location">
    <subcellularLocation>
        <location>Glycosome</location>
    </subcellularLocation>
</comment>
<comment type="similarity">
    <text evidence="5">Belongs to the phosphoglycerate kinase family.</text>
</comment>
<evidence type="ECO:0000250" key="1"/>
<evidence type="ECO:0000250" key="2">
    <source>
        <dbReference type="UniProtKB" id="P00558"/>
    </source>
</evidence>
<evidence type="ECO:0000250" key="3">
    <source>
        <dbReference type="UniProtKB" id="P07378"/>
    </source>
</evidence>
<evidence type="ECO:0000250" key="4">
    <source>
        <dbReference type="UniProtKB" id="Q7SIB7"/>
    </source>
</evidence>
<evidence type="ECO:0000305" key="5"/>
<organism>
    <name type="scientific">Leishmania mexicana</name>
    <dbReference type="NCBI Taxonomy" id="5665"/>
    <lineage>
        <taxon>Eukaryota</taxon>
        <taxon>Discoba</taxon>
        <taxon>Euglenozoa</taxon>
        <taxon>Kinetoplastea</taxon>
        <taxon>Metakinetoplastina</taxon>
        <taxon>Trypanosomatida</taxon>
        <taxon>Trypanosomatidae</taxon>
        <taxon>Leishmaniinae</taxon>
        <taxon>Leishmania</taxon>
    </lineage>
</organism>
<protein>
    <recommendedName>
        <fullName>Phosphoglycerate kinase, glycosomal</fullName>
        <shortName>Phosphoglycerate kinase C</shortName>
        <ecNumber evidence="2">2.7.2.3</ecNumber>
    </recommendedName>
</protein>
<accession>Q27685</accession>
<keyword id="KW-0067">ATP-binding</keyword>
<keyword id="KW-0324">Glycolysis</keyword>
<keyword id="KW-0327">Glycosome</keyword>
<keyword id="KW-0418">Kinase</keyword>
<keyword id="KW-0460">Magnesium</keyword>
<keyword id="KW-0479">Metal-binding</keyword>
<keyword id="KW-0547">Nucleotide-binding</keyword>
<keyword id="KW-0576">Peroxisome</keyword>
<keyword id="KW-0808">Transferase</keyword>
<name>PGKC_LEIME</name>
<proteinExistence type="inferred from homology"/>
<gene>
    <name type="primary">PGKC</name>
</gene>
<reference key="1">
    <citation type="journal article" date="1997" name="Mol. Biochem. Parasitol.">
        <title>Organization, sequence and stage-specific expression of the phosphoglycerate kinase genes of Leishmania mexicana mexicana.</title>
        <authorList>
            <person name="Adje C.A."/>
            <person name="Opperdoes F.R."/>
            <person name="Michels P.A.M."/>
        </authorList>
    </citation>
    <scope>NUCLEOTIDE SEQUENCE [GENOMIC DNA]</scope>
    <source>
        <strain>MHOM/BZ/84/BEL46</strain>
    </source>
</reference>